<organism>
    <name type="scientific">Clostridium beijerinckii (strain ATCC 51743 / NCIMB 8052)</name>
    <name type="common">Clostridium acetobutylicum</name>
    <dbReference type="NCBI Taxonomy" id="290402"/>
    <lineage>
        <taxon>Bacteria</taxon>
        <taxon>Bacillati</taxon>
        <taxon>Bacillota</taxon>
        <taxon>Clostridia</taxon>
        <taxon>Eubacteriales</taxon>
        <taxon>Clostridiaceae</taxon>
        <taxon>Clostridium</taxon>
    </lineage>
</organism>
<keyword id="KW-0320">Glycogen biosynthesis</keyword>
<keyword id="KW-0328">Glycosyltransferase</keyword>
<keyword id="KW-0808">Transferase</keyword>
<protein>
    <recommendedName>
        <fullName evidence="1">Glycogen synthase</fullName>
        <ecNumber evidence="1">2.4.1.21</ecNumber>
    </recommendedName>
    <alternativeName>
        <fullName evidence="1">Starch [bacterial glycogen] synthase</fullName>
    </alternativeName>
</protein>
<proteinExistence type="inferred from homology"/>
<dbReference type="EC" id="2.4.1.21" evidence="1"/>
<dbReference type="EMBL" id="CP000721">
    <property type="protein sequence ID" value="ABR37014.1"/>
    <property type="molecule type" value="Genomic_DNA"/>
</dbReference>
<dbReference type="RefSeq" id="WP_012061058.1">
    <property type="nucleotide sequence ID" value="NC_009617.1"/>
</dbReference>
<dbReference type="SMR" id="A6M334"/>
<dbReference type="CAZy" id="GT5">
    <property type="family name" value="Glycosyltransferase Family 5"/>
</dbReference>
<dbReference type="KEGG" id="cbe:Cbei_4908"/>
<dbReference type="eggNOG" id="COG0297">
    <property type="taxonomic scope" value="Bacteria"/>
</dbReference>
<dbReference type="HOGENOM" id="CLU_009583_18_2_9"/>
<dbReference type="UniPathway" id="UPA00164"/>
<dbReference type="Proteomes" id="UP000000565">
    <property type="component" value="Chromosome"/>
</dbReference>
<dbReference type="GO" id="GO:0009011">
    <property type="term" value="F:alpha-1,4-glucan glucosyltransferase (ADP-glucose donor) activity"/>
    <property type="evidence" value="ECO:0007669"/>
    <property type="project" value="UniProtKB-UniRule"/>
</dbReference>
<dbReference type="GO" id="GO:0004373">
    <property type="term" value="F:alpha-1,4-glucan glucosyltransferase (UDP-glucose donor) activity"/>
    <property type="evidence" value="ECO:0007669"/>
    <property type="project" value="InterPro"/>
</dbReference>
<dbReference type="GO" id="GO:0005978">
    <property type="term" value="P:glycogen biosynthetic process"/>
    <property type="evidence" value="ECO:0007669"/>
    <property type="project" value="UniProtKB-UniRule"/>
</dbReference>
<dbReference type="CDD" id="cd03791">
    <property type="entry name" value="GT5_Glycogen_synthase_DULL1-like"/>
    <property type="match status" value="1"/>
</dbReference>
<dbReference type="Gene3D" id="3.40.50.2000">
    <property type="entry name" value="Glycogen Phosphorylase B"/>
    <property type="match status" value="2"/>
</dbReference>
<dbReference type="HAMAP" id="MF_00484">
    <property type="entry name" value="Glycogen_synth"/>
    <property type="match status" value="1"/>
</dbReference>
<dbReference type="InterPro" id="IPR001296">
    <property type="entry name" value="Glyco_trans_1"/>
</dbReference>
<dbReference type="InterPro" id="IPR011835">
    <property type="entry name" value="GS/SS"/>
</dbReference>
<dbReference type="InterPro" id="IPR013534">
    <property type="entry name" value="Starch_synth_cat_dom"/>
</dbReference>
<dbReference type="NCBIfam" id="TIGR02095">
    <property type="entry name" value="glgA"/>
    <property type="match status" value="1"/>
</dbReference>
<dbReference type="NCBIfam" id="NF001898">
    <property type="entry name" value="PRK00654.1-1"/>
    <property type="match status" value="1"/>
</dbReference>
<dbReference type="NCBIfam" id="NF001899">
    <property type="entry name" value="PRK00654.1-2"/>
    <property type="match status" value="1"/>
</dbReference>
<dbReference type="PANTHER" id="PTHR45825:SF11">
    <property type="entry name" value="ALPHA AMYLASE DOMAIN-CONTAINING PROTEIN"/>
    <property type="match status" value="1"/>
</dbReference>
<dbReference type="PANTHER" id="PTHR45825">
    <property type="entry name" value="GRANULE-BOUND STARCH SYNTHASE 1, CHLOROPLASTIC/AMYLOPLASTIC"/>
    <property type="match status" value="1"/>
</dbReference>
<dbReference type="Pfam" id="PF08323">
    <property type="entry name" value="Glyco_transf_5"/>
    <property type="match status" value="1"/>
</dbReference>
<dbReference type="Pfam" id="PF00534">
    <property type="entry name" value="Glycos_transf_1"/>
    <property type="match status" value="1"/>
</dbReference>
<dbReference type="SUPFAM" id="SSF53756">
    <property type="entry name" value="UDP-Glycosyltransferase/glycogen phosphorylase"/>
    <property type="match status" value="1"/>
</dbReference>
<comment type="function">
    <text evidence="1">Synthesizes alpha-1,4-glucan chains using ADP-glucose.</text>
</comment>
<comment type="catalytic activity">
    <reaction evidence="1">
        <text>[(1-&gt;4)-alpha-D-glucosyl](n) + ADP-alpha-D-glucose = [(1-&gt;4)-alpha-D-glucosyl](n+1) + ADP + H(+)</text>
        <dbReference type="Rhea" id="RHEA:18189"/>
        <dbReference type="Rhea" id="RHEA-COMP:9584"/>
        <dbReference type="Rhea" id="RHEA-COMP:9587"/>
        <dbReference type="ChEBI" id="CHEBI:15378"/>
        <dbReference type="ChEBI" id="CHEBI:15444"/>
        <dbReference type="ChEBI" id="CHEBI:57498"/>
        <dbReference type="ChEBI" id="CHEBI:456216"/>
        <dbReference type="EC" id="2.4.1.21"/>
    </reaction>
</comment>
<comment type="pathway">
    <text evidence="1">Glycan biosynthesis; glycogen biosynthesis.</text>
</comment>
<comment type="similarity">
    <text evidence="1">Belongs to the glycosyltransferase 1 family. Bacterial/plant glycogen synthase subfamily.</text>
</comment>
<name>GLGA_CLOB8</name>
<sequence length="479" mass="55552">MRVLFVASEASPFIKTGGLGDVAGALPKALAQKNADVRVVIPKYKEISWEVRDKLRFVKWFNVKVGWREQFCGVWECFHNGVTYYVLDNEAYFKRDEVYGFYDDAERFAFFDRAVLDMLRQIDWQPDLIHCNDWQTGMLPVLLKFEYKRNDMFYWKMKCVYSIHNIAFQGVFDPQILPELFGFDMELYNNTCLKFDDGVSYMKGGLCYSDVITTVSNTYAYEIQTPEYGQRLDGVLRERSYALRGITNGIDYDEFNPKTDKFIKKNYSINSIEDKAINKTELQKELGLTVDKNIPMLAMVTRLTSQKGMDLLVNISDKLLQENVQLVILGTGDKHYEEHFKWLDSRYGNKVSANIKFDNGLANKIYAACDMFLMPSLFEPCGLGQLIALRYGSIPIVRETGGLKDTITAYNEYTGEGNGFSFRNYNSDELYNIIEYALWIYKDKGKWENLIENAMNSDNSWNRSAQIYLDLYRELTGQD</sequence>
<accession>A6M334</accession>
<gene>
    <name evidence="1" type="primary">glgA</name>
    <name type="ordered locus">Cbei_4908</name>
</gene>
<feature type="chain" id="PRO_1000081320" description="Glycogen synthase">
    <location>
        <begin position="1"/>
        <end position="479"/>
    </location>
</feature>
<feature type="binding site" evidence="1">
    <location>
        <position position="15"/>
    </location>
    <ligand>
        <name>ADP-alpha-D-glucose</name>
        <dbReference type="ChEBI" id="CHEBI:57498"/>
    </ligand>
</feature>
<reference key="1">
    <citation type="submission" date="2007-06" db="EMBL/GenBank/DDBJ databases">
        <title>Complete sequence of Clostridium beijerinckii NCIMB 8052.</title>
        <authorList>
            <consortium name="US DOE Joint Genome Institute"/>
            <person name="Copeland A."/>
            <person name="Lucas S."/>
            <person name="Lapidus A."/>
            <person name="Barry K."/>
            <person name="Detter J.C."/>
            <person name="Glavina del Rio T."/>
            <person name="Hammon N."/>
            <person name="Israni S."/>
            <person name="Dalin E."/>
            <person name="Tice H."/>
            <person name="Pitluck S."/>
            <person name="Sims D."/>
            <person name="Brettin T."/>
            <person name="Bruce D."/>
            <person name="Tapia R."/>
            <person name="Brainard J."/>
            <person name="Schmutz J."/>
            <person name="Larimer F."/>
            <person name="Land M."/>
            <person name="Hauser L."/>
            <person name="Kyrpides N."/>
            <person name="Mikhailova N."/>
            <person name="Bennet G."/>
            <person name="Cann I."/>
            <person name="Chen J.-S."/>
            <person name="Contreras A.L."/>
            <person name="Jones D."/>
            <person name="Kashket E."/>
            <person name="Mitchell W."/>
            <person name="Stoddard S."/>
            <person name="Schwarz W."/>
            <person name="Qureshi N."/>
            <person name="Young M."/>
            <person name="Shi Z."/>
            <person name="Ezeji T."/>
            <person name="White B."/>
            <person name="Blaschek H."/>
            <person name="Richardson P."/>
        </authorList>
    </citation>
    <scope>NUCLEOTIDE SEQUENCE [LARGE SCALE GENOMIC DNA]</scope>
    <source>
        <strain>ATCC 51743 / NCIMB 8052</strain>
    </source>
</reference>
<evidence type="ECO:0000255" key="1">
    <source>
        <dbReference type="HAMAP-Rule" id="MF_00484"/>
    </source>
</evidence>